<evidence type="ECO:0000255" key="1">
    <source>
        <dbReference type="HAMAP-Rule" id="MF_00692"/>
    </source>
</evidence>
<evidence type="ECO:0000305" key="2"/>
<sequence length="486" mass="54926">MKALDQLTFDNRFARLGDAFSTQVLPEPIADPRLVVASESAMALLDLDPAQAELPVFAELFSGHKLWEEADPRAMVYSGHQFGSYNPRLGDGRGLLLAEVLNDAGEHWDLHLKGAGQTPYSRMGDGRAVLRSSIREFLASEALHALGIATSRALCVIGSSTPVWRETRESAAMLTRLAQSHVRFGHFEYFYYTKQPEQQRVLIDHVLEQHYPECREAEQPYLAMFRTIVERNAELIARWQAYGFCHGVMNTDNMSILGITFDFGPYAFLDDFDANFICNHSDDRGRYSYANQVPIAHWNLSALAQALTTVIEVEPLKEALGLFLPLYQAHYLDLMRRRLGLTTAEDDDMVLVERLLQCMQRGGVDYSLFFRKLGEQPVAEALKVARDDFIDLAGFDAWGADYLARCGREPGNAEGRRERMHAVNPLYVLRNYLAQKAIEAAEAGDYSEVRRLHQVLARPFEEQPGMQAYAERPPEWGKHLEISCSS</sequence>
<comment type="function">
    <text evidence="1">Nucleotidyltransferase involved in the post-translational modification of proteins. It can catalyze the addition of adenosine monophosphate (AMP) or uridine monophosphate (UMP) to a protein, resulting in modifications known as AMPylation and UMPylation.</text>
</comment>
<comment type="catalytic activity">
    <reaction evidence="1">
        <text>L-seryl-[protein] + ATP = 3-O-(5'-adenylyl)-L-seryl-[protein] + diphosphate</text>
        <dbReference type="Rhea" id="RHEA:58120"/>
        <dbReference type="Rhea" id="RHEA-COMP:9863"/>
        <dbReference type="Rhea" id="RHEA-COMP:15073"/>
        <dbReference type="ChEBI" id="CHEBI:29999"/>
        <dbReference type="ChEBI" id="CHEBI:30616"/>
        <dbReference type="ChEBI" id="CHEBI:33019"/>
        <dbReference type="ChEBI" id="CHEBI:142516"/>
        <dbReference type="EC" id="2.7.7.108"/>
    </reaction>
</comment>
<comment type="catalytic activity">
    <reaction evidence="1">
        <text>L-threonyl-[protein] + ATP = 3-O-(5'-adenylyl)-L-threonyl-[protein] + diphosphate</text>
        <dbReference type="Rhea" id="RHEA:54292"/>
        <dbReference type="Rhea" id="RHEA-COMP:11060"/>
        <dbReference type="Rhea" id="RHEA-COMP:13847"/>
        <dbReference type="ChEBI" id="CHEBI:30013"/>
        <dbReference type="ChEBI" id="CHEBI:30616"/>
        <dbReference type="ChEBI" id="CHEBI:33019"/>
        <dbReference type="ChEBI" id="CHEBI:138113"/>
        <dbReference type="EC" id="2.7.7.108"/>
    </reaction>
</comment>
<comment type="catalytic activity">
    <reaction evidence="1">
        <text>L-tyrosyl-[protein] + ATP = O-(5'-adenylyl)-L-tyrosyl-[protein] + diphosphate</text>
        <dbReference type="Rhea" id="RHEA:54288"/>
        <dbReference type="Rhea" id="RHEA-COMP:10136"/>
        <dbReference type="Rhea" id="RHEA-COMP:13846"/>
        <dbReference type="ChEBI" id="CHEBI:30616"/>
        <dbReference type="ChEBI" id="CHEBI:33019"/>
        <dbReference type="ChEBI" id="CHEBI:46858"/>
        <dbReference type="ChEBI" id="CHEBI:83624"/>
        <dbReference type="EC" id="2.7.7.108"/>
    </reaction>
</comment>
<comment type="catalytic activity">
    <reaction evidence="1">
        <text>L-histidyl-[protein] + UTP = N(tele)-(5'-uridylyl)-L-histidyl-[protein] + diphosphate</text>
        <dbReference type="Rhea" id="RHEA:83891"/>
        <dbReference type="Rhea" id="RHEA-COMP:9745"/>
        <dbReference type="Rhea" id="RHEA-COMP:20239"/>
        <dbReference type="ChEBI" id="CHEBI:29979"/>
        <dbReference type="ChEBI" id="CHEBI:33019"/>
        <dbReference type="ChEBI" id="CHEBI:46398"/>
        <dbReference type="ChEBI" id="CHEBI:233474"/>
    </reaction>
</comment>
<comment type="catalytic activity">
    <reaction evidence="1">
        <text>L-seryl-[protein] + UTP = O-(5'-uridylyl)-L-seryl-[protein] + diphosphate</text>
        <dbReference type="Rhea" id="RHEA:64604"/>
        <dbReference type="Rhea" id="RHEA-COMP:9863"/>
        <dbReference type="Rhea" id="RHEA-COMP:16635"/>
        <dbReference type="ChEBI" id="CHEBI:29999"/>
        <dbReference type="ChEBI" id="CHEBI:33019"/>
        <dbReference type="ChEBI" id="CHEBI:46398"/>
        <dbReference type="ChEBI" id="CHEBI:156051"/>
    </reaction>
</comment>
<comment type="catalytic activity">
    <reaction evidence="1">
        <text>L-tyrosyl-[protein] + UTP = O-(5'-uridylyl)-L-tyrosyl-[protein] + diphosphate</text>
        <dbReference type="Rhea" id="RHEA:83887"/>
        <dbReference type="Rhea" id="RHEA-COMP:10136"/>
        <dbReference type="Rhea" id="RHEA-COMP:20238"/>
        <dbReference type="ChEBI" id="CHEBI:33019"/>
        <dbReference type="ChEBI" id="CHEBI:46398"/>
        <dbReference type="ChEBI" id="CHEBI:46858"/>
        <dbReference type="ChEBI" id="CHEBI:90602"/>
    </reaction>
</comment>
<comment type="cofactor">
    <cofactor evidence="1">
        <name>Mg(2+)</name>
        <dbReference type="ChEBI" id="CHEBI:18420"/>
    </cofactor>
    <cofactor evidence="1">
        <name>Mn(2+)</name>
        <dbReference type="ChEBI" id="CHEBI:29035"/>
    </cofactor>
</comment>
<comment type="similarity">
    <text evidence="1">Belongs to the SELO family.</text>
</comment>
<comment type="sequence caution" evidence="2">
    <conflict type="erroneous initiation">
        <sequence resource="EMBL-CDS" id="AAN70633"/>
    </conflict>
</comment>
<keyword id="KW-0067">ATP-binding</keyword>
<keyword id="KW-0460">Magnesium</keyword>
<keyword id="KW-0464">Manganese</keyword>
<keyword id="KW-0479">Metal-binding</keyword>
<keyword id="KW-0547">Nucleotide-binding</keyword>
<keyword id="KW-0548">Nucleotidyltransferase</keyword>
<keyword id="KW-1185">Reference proteome</keyword>
<keyword id="KW-0808">Transferase</keyword>
<gene>
    <name evidence="1" type="primary">ydiU</name>
    <name evidence="1" type="synonym">selO</name>
    <name type="ordered locus">PP_5068</name>
</gene>
<name>SELO_PSEPK</name>
<proteinExistence type="inferred from homology"/>
<protein>
    <recommendedName>
        <fullName evidence="1">Protein nucleotidyltransferase YdiU</fullName>
        <ecNumber evidence="1">2.7.7.-</ecNumber>
    </recommendedName>
    <alternativeName>
        <fullName evidence="1">Protein adenylyltransferase YdiU</fullName>
        <ecNumber evidence="1">2.7.7.108</ecNumber>
    </alternativeName>
    <alternativeName>
        <fullName evidence="1">Protein uridylyltransferase YdiU</fullName>
        <ecNumber evidence="1">2.7.7.-</ecNumber>
    </alternativeName>
</protein>
<accession>Q88CW2</accession>
<dbReference type="EC" id="2.7.7.-" evidence="1"/>
<dbReference type="EC" id="2.7.7.108" evidence="1"/>
<dbReference type="EMBL" id="AE015451">
    <property type="protein sequence ID" value="AAN70633.1"/>
    <property type="status" value="ALT_INIT"/>
    <property type="molecule type" value="Genomic_DNA"/>
</dbReference>
<dbReference type="RefSeq" id="NP_747169.2">
    <property type="nucleotide sequence ID" value="NC_002947.4"/>
</dbReference>
<dbReference type="RefSeq" id="WP_049588303.1">
    <property type="nucleotide sequence ID" value="NZ_CP169744.1"/>
</dbReference>
<dbReference type="SMR" id="Q88CW2"/>
<dbReference type="STRING" id="160488.PP_5068"/>
<dbReference type="PaxDb" id="160488-PP_5068"/>
<dbReference type="GeneID" id="83682802"/>
<dbReference type="KEGG" id="ppu:PP_5068"/>
<dbReference type="PATRIC" id="fig|160488.4.peg.5410"/>
<dbReference type="eggNOG" id="COG0397">
    <property type="taxonomic scope" value="Bacteria"/>
</dbReference>
<dbReference type="HOGENOM" id="CLU_010245_4_0_6"/>
<dbReference type="OrthoDB" id="9776281at2"/>
<dbReference type="PhylomeDB" id="Q88CW2"/>
<dbReference type="BioCyc" id="PPUT160488:G1G01-5412-MONOMER"/>
<dbReference type="Proteomes" id="UP000000556">
    <property type="component" value="Chromosome"/>
</dbReference>
<dbReference type="GO" id="GO:0070733">
    <property type="term" value="F:AMPylase activity"/>
    <property type="evidence" value="ECO:0007669"/>
    <property type="project" value="RHEA"/>
</dbReference>
<dbReference type="GO" id="GO:0005524">
    <property type="term" value="F:ATP binding"/>
    <property type="evidence" value="ECO:0007669"/>
    <property type="project" value="UniProtKB-UniRule"/>
</dbReference>
<dbReference type="GO" id="GO:0000287">
    <property type="term" value="F:magnesium ion binding"/>
    <property type="evidence" value="ECO:0007669"/>
    <property type="project" value="UniProtKB-UniRule"/>
</dbReference>
<dbReference type="HAMAP" id="MF_00692">
    <property type="entry name" value="YdiU_SelO"/>
    <property type="match status" value="1"/>
</dbReference>
<dbReference type="InterPro" id="IPR003846">
    <property type="entry name" value="SelO"/>
</dbReference>
<dbReference type="NCBIfam" id="NF000658">
    <property type="entry name" value="PRK00029.1"/>
    <property type="match status" value="1"/>
</dbReference>
<dbReference type="NCBIfam" id="NF045949">
    <property type="entry name" value="PrtAdtaseSelOPseudom"/>
    <property type="match status" value="1"/>
</dbReference>
<dbReference type="PANTHER" id="PTHR32057">
    <property type="entry name" value="PROTEIN ADENYLYLTRANSFERASE SELO, MITOCHONDRIAL"/>
    <property type="match status" value="1"/>
</dbReference>
<dbReference type="PANTHER" id="PTHR32057:SF14">
    <property type="entry name" value="PROTEIN ADENYLYLTRANSFERASE SELO, MITOCHONDRIAL"/>
    <property type="match status" value="1"/>
</dbReference>
<dbReference type="Pfam" id="PF02696">
    <property type="entry name" value="SelO"/>
    <property type="match status" value="1"/>
</dbReference>
<reference key="1">
    <citation type="journal article" date="2002" name="Environ. Microbiol.">
        <title>Complete genome sequence and comparative analysis of the metabolically versatile Pseudomonas putida KT2440.</title>
        <authorList>
            <person name="Nelson K.E."/>
            <person name="Weinel C."/>
            <person name="Paulsen I.T."/>
            <person name="Dodson R.J."/>
            <person name="Hilbert H."/>
            <person name="Martins dos Santos V.A.P."/>
            <person name="Fouts D.E."/>
            <person name="Gill S.R."/>
            <person name="Pop M."/>
            <person name="Holmes M."/>
            <person name="Brinkac L.M."/>
            <person name="Beanan M.J."/>
            <person name="DeBoy R.T."/>
            <person name="Daugherty S.C."/>
            <person name="Kolonay J.F."/>
            <person name="Madupu R."/>
            <person name="Nelson W.C."/>
            <person name="White O."/>
            <person name="Peterson J.D."/>
            <person name="Khouri H.M."/>
            <person name="Hance I."/>
            <person name="Chris Lee P."/>
            <person name="Holtzapple E.K."/>
            <person name="Scanlan D."/>
            <person name="Tran K."/>
            <person name="Moazzez A."/>
            <person name="Utterback T.R."/>
            <person name="Rizzo M."/>
            <person name="Lee K."/>
            <person name="Kosack D."/>
            <person name="Moestl D."/>
            <person name="Wedler H."/>
            <person name="Lauber J."/>
            <person name="Stjepandic D."/>
            <person name="Hoheisel J."/>
            <person name="Straetz M."/>
            <person name="Heim S."/>
            <person name="Kiewitz C."/>
            <person name="Eisen J.A."/>
            <person name="Timmis K.N."/>
            <person name="Duesterhoeft A."/>
            <person name="Tuemmler B."/>
            <person name="Fraser C.M."/>
        </authorList>
    </citation>
    <scope>NUCLEOTIDE SEQUENCE [LARGE SCALE GENOMIC DNA]</scope>
    <source>
        <strain>ATCC 47054 / DSM 6125 / CFBP 8728 / NCIMB 11950 / KT2440</strain>
    </source>
</reference>
<organism>
    <name type="scientific">Pseudomonas putida (strain ATCC 47054 / DSM 6125 / CFBP 8728 / NCIMB 11950 / KT2440)</name>
    <dbReference type="NCBI Taxonomy" id="160488"/>
    <lineage>
        <taxon>Bacteria</taxon>
        <taxon>Pseudomonadati</taxon>
        <taxon>Pseudomonadota</taxon>
        <taxon>Gammaproteobacteria</taxon>
        <taxon>Pseudomonadales</taxon>
        <taxon>Pseudomonadaceae</taxon>
        <taxon>Pseudomonas</taxon>
    </lineage>
</organism>
<feature type="chain" id="PRO_0000121421" description="Protein nucleotidyltransferase YdiU">
    <location>
        <begin position="1"/>
        <end position="486"/>
    </location>
</feature>
<feature type="active site" description="Proton acceptor" evidence="1">
    <location>
        <position position="252"/>
    </location>
</feature>
<feature type="binding site" evidence="1">
    <location>
        <position position="90"/>
    </location>
    <ligand>
        <name>ATP</name>
        <dbReference type="ChEBI" id="CHEBI:30616"/>
    </ligand>
</feature>
<feature type="binding site" evidence="1">
    <location>
        <position position="92"/>
    </location>
    <ligand>
        <name>ATP</name>
        <dbReference type="ChEBI" id="CHEBI:30616"/>
    </ligand>
</feature>
<feature type="binding site" evidence="1">
    <location>
        <position position="93"/>
    </location>
    <ligand>
        <name>ATP</name>
        <dbReference type="ChEBI" id="CHEBI:30616"/>
    </ligand>
</feature>
<feature type="binding site" evidence="1">
    <location>
        <position position="113"/>
    </location>
    <ligand>
        <name>ATP</name>
        <dbReference type="ChEBI" id="CHEBI:30616"/>
    </ligand>
</feature>
<feature type="binding site" evidence="1">
    <location>
        <position position="125"/>
    </location>
    <ligand>
        <name>ATP</name>
        <dbReference type="ChEBI" id="CHEBI:30616"/>
    </ligand>
</feature>
<feature type="binding site" evidence="1">
    <location>
        <position position="126"/>
    </location>
    <ligand>
        <name>ATP</name>
        <dbReference type="ChEBI" id="CHEBI:30616"/>
    </ligand>
</feature>
<feature type="binding site" evidence="1">
    <location>
        <position position="176"/>
    </location>
    <ligand>
        <name>ATP</name>
        <dbReference type="ChEBI" id="CHEBI:30616"/>
    </ligand>
</feature>
<feature type="binding site" evidence="1">
    <location>
        <position position="183"/>
    </location>
    <ligand>
        <name>ATP</name>
        <dbReference type="ChEBI" id="CHEBI:30616"/>
    </ligand>
</feature>
<feature type="binding site" evidence="1">
    <location>
        <position position="253"/>
    </location>
    <ligand>
        <name>Mg(2+)</name>
        <dbReference type="ChEBI" id="CHEBI:18420"/>
    </ligand>
</feature>
<feature type="binding site" evidence="1">
    <location>
        <position position="262"/>
    </location>
    <ligand>
        <name>ATP</name>
        <dbReference type="ChEBI" id="CHEBI:30616"/>
    </ligand>
</feature>
<feature type="binding site" evidence="1">
    <location>
        <position position="262"/>
    </location>
    <ligand>
        <name>Mg(2+)</name>
        <dbReference type="ChEBI" id="CHEBI:18420"/>
    </ligand>
</feature>